<evidence type="ECO:0000255" key="1"/>
<evidence type="ECO:0000305" key="2"/>
<name>YDJJ_BACSU</name>
<protein>
    <recommendedName>
        <fullName>Uncharacterized membrane protein YdjJ</fullName>
    </recommendedName>
</protein>
<accession>O34733</accession>
<accession>Q797C4</accession>
<feature type="chain" id="PRO_0000389626" description="Uncharacterized membrane protein YdjJ">
    <location>
        <begin position="1"/>
        <end position="341"/>
    </location>
</feature>
<feature type="transmembrane region" description="Helical" evidence="1">
    <location>
        <begin position="6"/>
        <end position="26"/>
    </location>
</feature>
<feature type="transmembrane region" description="Helical" evidence="1">
    <location>
        <begin position="63"/>
        <end position="83"/>
    </location>
</feature>
<feature type="transmembrane region" description="Helical" evidence="1">
    <location>
        <begin position="137"/>
        <end position="157"/>
    </location>
</feature>
<organism>
    <name type="scientific">Bacillus subtilis (strain 168)</name>
    <dbReference type="NCBI Taxonomy" id="224308"/>
    <lineage>
        <taxon>Bacteria</taxon>
        <taxon>Bacillati</taxon>
        <taxon>Bacillota</taxon>
        <taxon>Bacilli</taxon>
        <taxon>Bacillales</taxon>
        <taxon>Bacillaceae</taxon>
        <taxon>Bacillus</taxon>
    </lineage>
</organism>
<reference key="1">
    <citation type="journal article" date="1997" name="DNA Res.">
        <title>Sequence analysis of the groESL-cotA region of the Bacillus subtilis genome, containing the restriction/modification system genes.</title>
        <authorList>
            <person name="Kasahara Y."/>
            <person name="Nakai S."/>
            <person name="Ogasawara N."/>
            <person name="Yata K."/>
            <person name="Sadaie Y."/>
        </authorList>
    </citation>
    <scope>NUCLEOTIDE SEQUENCE [GENOMIC DNA]</scope>
    <source>
        <strain>168 / Marburg / ATCC 6051 / DSM 10 / JCM 1465 / NBRC 13719 / NCIMB 3610 / NRRL NRS-744 / VKM B-501</strain>
    </source>
</reference>
<reference key="2">
    <citation type="journal article" date="1997" name="Nature">
        <title>The complete genome sequence of the Gram-positive bacterium Bacillus subtilis.</title>
        <authorList>
            <person name="Kunst F."/>
            <person name="Ogasawara N."/>
            <person name="Moszer I."/>
            <person name="Albertini A.M."/>
            <person name="Alloni G."/>
            <person name="Azevedo V."/>
            <person name="Bertero M.G."/>
            <person name="Bessieres P."/>
            <person name="Bolotin A."/>
            <person name="Borchert S."/>
            <person name="Borriss R."/>
            <person name="Boursier L."/>
            <person name="Brans A."/>
            <person name="Braun M."/>
            <person name="Brignell S.C."/>
            <person name="Bron S."/>
            <person name="Brouillet S."/>
            <person name="Bruschi C.V."/>
            <person name="Caldwell B."/>
            <person name="Capuano V."/>
            <person name="Carter N.M."/>
            <person name="Choi S.-K."/>
            <person name="Codani J.-J."/>
            <person name="Connerton I.F."/>
            <person name="Cummings N.J."/>
            <person name="Daniel R.A."/>
            <person name="Denizot F."/>
            <person name="Devine K.M."/>
            <person name="Duesterhoeft A."/>
            <person name="Ehrlich S.D."/>
            <person name="Emmerson P.T."/>
            <person name="Entian K.-D."/>
            <person name="Errington J."/>
            <person name="Fabret C."/>
            <person name="Ferrari E."/>
            <person name="Foulger D."/>
            <person name="Fritz C."/>
            <person name="Fujita M."/>
            <person name="Fujita Y."/>
            <person name="Fuma S."/>
            <person name="Galizzi A."/>
            <person name="Galleron N."/>
            <person name="Ghim S.-Y."/>
            <person name="Glaser P."/>
            <person name="Goffeau A."/>
            <person name="Golightly E.J."/>
            <person name="Grandi G."/>
            <person name="Guiseppi G."/>
            <person name="Guy B.J."/>
            <person name="Haga K."/>
            <person name="Haiech J."/>
            <person name="Harwood C.R."/>
            <person name="Henaut A."/>
            <person name="Hilbert H."/>
            <person name="Holsappel S."/>
            <person name="Hosono S."/>
            <person name="Hullo M.-F."/>
            <person name="Itaya M."/>
            <person name="Jones L.-M."/>
            <person name="Joris B."/>
            <person name="Karamata D."/>
            <person name="Kasahara Y."/>
            <person name="Klaerr-Blanchard M."/>
            <person name="Klein C."/>
            <person name="Kobayashi Y."/>
            <person name="Koetter P."/>
            <person name="Koningstein G."/>
            <person name="Krogh S."/>
            <person name="Kumano M."/>
            <person name="Kurita K."/>
            <person name="Lapidus A."/>
            <person name="Lardinois S."/>
            <person name="Lauber J."/>
            <person name="Lazarevic V."/>
            <person name="Lee S.-M."/>
            <person name="Levine A."/>
            <person name="Liu H."/>
            <person name="Masuda S."/>
            <person name="Mauel C."/>
            <person name="Medigue C."/>
            <person name="Medina N."/>
            <person name="Mellado R.P."/>
            <person name="Mizuno M."/>
            <person name="Moestl D."/>
            <person name="Nakai S."/>
            <person name="Noback M."/>
            <person name="Noone D."/>
            <person name="O'Reilly M."/>
            <person name="Ogawa K."/>
            <person name="Ogiwara A."/>
            <person name="Oudega B."/>
            <person name="Park S.-H."/>
            <person name="Parro V."/>
            <person name="Pohl T.M."/>
            <person name="Portetelle D."/>
            <person name="Porwollik S."/>
            <person name="Prescott A.M."/>
            <person name="Presecan E."/>
            <person name="Pujic P."/>
            <person name="Purnelle B."/>
            <person name="Rapoport G."/>
            <person name="Rey M."/>
            <person name="Reynolds S."/>
            <person name="Rieger M."/>
            <person name="Rivolta C."/>
            <person name="Rocha E."/>
            <person name="Roche B."/>
            <person name="Rose M."/>
            <person name="Sadaie Y."/>
            <person name="Sato T."/>
            <person name="Scanlan E."/>
            <person name="Schleich S."/>
            <person name="Schroeter R."/>
            <person name="Scoffone F."/>
            <person name="Sekiguchi J."/>
            <person name="Sekowska A."/>
            <person name="Seror S.J."/>
            <person name="Serror P."/>
            <person name="Shin B.-S."/>
            <person name="Soldo B."/>
            <person name="Sorokin A."/>
            <person name="Tacconi E."/>
            <person name="Takagi T."/>
            <person name="Takahashi H."/>
            <person name="Takemaru K."/>
            <person name="Takeuchi M."/>
            <person name="Tamakoshi A."/>
            <person name="Tanaka T."/>
            <person name="Terpstra P."/>
            <person name="Tognoni A."/>
            <person name="Tosato V."/>
            <person name="Uchiyama S."/>
            <person name="Vandenbol M."/>
            <person name="Vannier F."/>
            <person name="Vassarotti A."/>
            <person name="Viari A."/>
            <person name="Wambutt R."/>
            <person name="Wedler E."/>
            <person name="Wedler H."/>
            <person name="Weitzenegger T."/>
            <person name="Winters P."/>
            <person name="Wipat A."/>
            <person name="Yamamoto H."/>
            <person name="Yamane K."/>
            <person name="Yasumoto K."/>
            <person name="Yata K."/>
            <person name="Yoshida K."/>
            <person name="Yoshikawa H.-F."/>
            <person name="Zumstein E."/>
            <person name="Yoshikawa H."/>
            <person name="Danchin A."/>
        </authorList>
    </citation>
    <scope>NUCLEOTIDE SEQUENCE [LARGE SCALE GENOMIC DNA]</scope>
    <source>
        <strain>168</strain>
    </source>
</reference>
<proteinExistence type="predicted"/>
<comment type="subcellular location">
    <subcellularLocation>
        <location evidence="2">Cell membrane</location>
        <topology evidence="2">Multi-pass membrane protein</topology>
    </subcellularLocation>
</comment>
<dbReference type="EMBL" id="AB007638">
    <property type="protein sequence ID" value="BAA22765.1"/>
    <property type="molecule type" value="Genomic_DNA"/>
</dbReference>
<dbReference type="EMBL" id="AL009126">
    <property type="protein sequence ID" value="CAB12441.1"/>
    <property type="molecule type" value="Genomic_DNA"/>
</dbReference>
<dbReference type="PIR" id="F69789">
    <property type="entry name" value="F69789"/>
</dbReference>
<dbReference type="RefSeq" id="NP_388503.1">
    <property type="nucleotide sequence ID" value="NC_000964.3"/>
</dbReference>
<dbReference type="RefSeq" id="WP_003242752.1">
    <property type="nucleotide sequence ID" value="NZ_OZ025638.1"/>
</dbReference>
<dbReference type="SMR" id="O34733"/>
<dbReference type="FunCoup" id="O34733">
    <property type="interactions" value="10"/>
</dbReference>
<dbReference type="STRING" id="224308.BSU06220"/>
<dbReference type="PaxDb" id="224308-BSU06220"/>
<dbReference type="EnsemblBacteria" id="CAB12441">
    <property type="protein sequence ID" value="CAB12441"/>
    <property type="gene ID" value="BSU_06220"/>
</dbReference>
<dbReference type="GeneID" id="936027"/>
<dbReference type="KEGG" id="bsu:BSU06220"/>
<dbReference type="PATRIC" id="fig|224308.179.peg.673"/>
<dbReference type="eggNOG" id="ENOG502Z9EI">
    <property type="taxonomic scope" value="Bacteria"/>
</dbReference>
<dbReference type="InParanoid" id="O34733"/>
<dbReference type="OrthoDB" id="3422146at2"/>
<dbReference type="BioCyc" id="BSUB:BSU06220-MONOMER"/>
<dbReference type="Proteomes" id="UP000001570">
    <property type="component" value="Chromosome"/>
</dbReference>
<dbReference type="GO" id="GO:0005886">
    <property type="term" value="C:plasma membrane"/>
    <property type="evidence" value="ECO:0007669"/>
    <property type="project" value="UniProtKB-SubCell"/>
</dbReference>
<dbReference type="Gene3D" id="1.10.287.70">
    <property type="match status" value="1"/>
</dbReference>
<dbReference type="InterPro" id="IPR013099">
    <property type="entry name" value="K_chnl_dom"/>
</dbReference>
<dbReference type="Pfam" id="PF07885">
    <property type="entry name" value="Ion_trans_2"/>
    <property type="match status" value="1"/>
</dbReference>
<dbReference type="SUPFAM" id="SSF81324">
    <property type="entry name" value="Voltage-gated potassium channels"/>
    <property type="match status" value="1"/>
</dbReference>
<sequence length="341" mass="37787">MNEGYIIAGLLLLTAGMIDFLWTTLWLESGAGPITRCLSAWLWKGCRKISGDHAKVLSMAGPLLLCLTLVIWISLFWSGWVLIYSSDPHSLMETQSKEPASWSDRIYFSGYVMFTLGNGDLAPNGGLWKLVTIIETAQGLLTITFSVTYLISVLSAVNQKRSFAQSVLSLGHDGTEIVHNAWNGKDFHDIDFLLVAASSELGKLTAQHNAFPILHFYHSTQHQESSIIAVAVLDEALTIFKYGIPEQYQPNQLHIKEARSSIKNYLDTVHTAYIHPAEQAPPEPDISKLQQSGIPALSKQTFQIAVNSIKERRQLLLGIIQAGARKWPVQEQAIGNAYSPK</sequence>
<gene>
    <name type="primary">ydjJ</name>
    <name type="ordered locus">BSU06220</name>
</gene>
<keyword id="KW-1003">Cell membrane</keyword>
<keyword id="KW-0472">Membrane</keyword>
<keyword id="KW-1185">Reference proteome</keyword>
<keyword id="KW-0812">Transmembrane</keyword>
<keyword id="KW-1133">Transmembrane helix</keyword>